<evidence type="ECO:0000250" key="1"/>
<evidence type="ECO:0000250" key="2">
    <source>
        <dbReference type="UniProtKB" id="A0A096MJY4"/>
    </source>
</evidence>
<evidence type="ECO:0000250" key="3">
    <source>
        <dbReference type="UniProtKB" id="Q06413"/>
    </source>
</evidence>
<evidence type="ECO:0000250" key="4">
    <source>
        <dbReference type="UniProtKB" id="Q8CFN5"/>
    </source>
</evidence>
<evidence type="ECO:0000255" key="5"/>
<evidence type="ECO:0000255" key="6">
    <source>
        <dbReference type="PROSITE-ProRule" id="PRU00251"/>
    </source>
</evidence>
<evidence type="ECO:0000256" key="7">
    <source>
        <dbReference type="SAM" id="MobiDB-lite"/>
    </source>
</evidence>
<evidence type="ECO:0000305" key="8"/>
<dbReference type="EMBL" id="CR861416">
    <property type="protein sequence ID" value="CAH93472.1"/>
    <property type="molecule type" value="mRNA"/>
</dbReference>
<dbReference type="RefSeq" id="NP_001127669.1">
    <property type="nucleotide sequence ID" value="NM_001134197.2"/>
</dbReference>
<dbReference type="RefSeq" id="XP_009239150.1">
    <property type="nucleotide sequence ID" value="XM_009240875.3"/>
</dbReference>
<dbReference type="RefSeq" id="XP_054411188.1">
    <property type="nucleotide sequence ID" value="XM_054555213.2"/>
</dbReference>
<dbReference type="RefSeq" id="XP_054411189.1">
    <property type="nucleotide sequence ID" value="XM_054555214.2"/>
</dbReference>
<dbReference type="RefSeq" id="XP_054411190.1">
    <property type="nucleotide sequence ID" value="XM_054555215.2"/>
</dbReference>
<dbReference type="RefSeq" id="XP_054411191.1">
    <property type="nucleotide sequence ID" value="XM_054555216.2"/>
</dbReference>
<dbReference type="RefSeq" id="XP_054411192.1">
    <property type="nucleotide sequence ID" value="XM_054555217.2"/>
</dbReference>
<dbReference type="RefSeq" id="XP_063580037.1">
    <property type="nucleotide sequence ID" value="XM_063723967.1"/>
</dbReference>
<dbReference type="SMR" id="Q5R444"/>
<dbReference type="FunCoup" id="Q5R444">
    <property type="interactions" value="3338"/>
</dbReference>
<dbReference type="STRING" id="9601.ENSPPYP00000017465"/>
<dbReference type="Ensembl" id="ENSPPYT00000018172.3">
    <property type="protein sequence ID" value="ENSPPYP00000017465.3"/>
    <property type="gene ID" value="ENSPPYG00000033322.1"/>
</dbReference>
<dbReference type="GeneID" id="100174751"/>
<dbReference type="KEGG" id="pon:100174751"/>
<dbReference type="CTD" id="4208"/>
<dbReference type="eggNOG" id="KOG0014">
    <property type="taxonomic scope" value="Eukaryota"/>
</dbReference>
<dbReference type="GeneTree" id="ENSGT00940000157492"/>
<dbReference type="InParanoid" id="Q5R444"/>
<dbReference type="OrthoDB" id="1898716at2759"/>
<dbReference type="Proteomes" id="UP000001595">
    <property type="component" value="Chromosome 5"/>
</dbReference>
<dbReference type="GO" id="GO:0005737">
    <property type="term" value="C:cytoplasm"/>
    <property type="evidence" value="ECO:0000250"/>
    <property type="project" value="UniProtKB"/>
</dbReference>
<dbReference type="GO" id="GO:0016607">
    <property type="term" value="C:nuclear speck"/>
    <property type="evidence" value="ECO:0000250"/>
    <property type="project" value="UniProtKB"/>
</dbReference>
<dbReference type="GO" id="GO:0005634">
    <property type="term" value="C:nucleus"/>
    <property type="evidence" value="ECO:0000250"/>
    <property type="project" value="UniProtKB"/>
</dbReference>
<dbReference type="GO" id="GO:0032991">
    <property type="term" value="C:protein-containing complex"/>
    <property type="evidence" value="ECO:0000250"/>
    <property type="project" value="UniProtKB"/>
</dbReference>
<dbReference type="GO" id="GO:0016528">
    <property type="term" value="C:sarcoplasm"/>
    <property type="evidence" value="ECO:0007669"/>
    <property type="project" value="UniProtKB-SubCell"/>
</dbReference>
<dbReference type="GO" id="GO:0003677">
    <property type="term" value="F:DNA binding"/>
    <property type="evidence" value="ECO:0000250"/>
    <property type="project" value="UniProtKB"/>
</dbReference>
<dbReference type="GO" id="GO:0001228">
    <property type="term" value="F:DNA-binding transcription activator activity, RNA polymerase II-specific"/>
    <property type="evidence" value="ECO:0000250"/>
    <property type="project" value="UniProtKB"/>
</dbReference>
<dbReference type="GO" id="GO:0003700">
    <property type="term" value="F:DNA-binding transcription factor activity"/>
    <property type="evidence" value="ECO:0000250"/>
    <property type="project" value="UniProtKB"/>
</dbReference>
<dbReference type="GO" id="GO:0000981">
    <property type="term" value="F:DNA-binding transcription factor activity, RNA polymerase II-specific"/>
    <property type="evidence" value="ECO:0000250"/>
    <property type="project" value="UniProtKB"/>
</dbReference>
<dbReference type="GO" id="GO:0042826">
    <property type="term" value="F:histone deacetylase binding"/>
    <property type="evidence" value="ECO:0007669"/>
    <property type="project" value="TreeGrafter"/>
</dbReference>
<dbReference type="GO" id="GO:0046983">
    <property type="term" value="F:protein dimerization activity"/>
    <property type="evidence" value="ECO:0007669"/>
    <property type="project" value="InterPro"/>
</dbReference>
<dbReference type="GO" id="GO:0000978">
    <property type="term" value="F:RNA polymerase II cis-regulatory region sequence-specific DNA binding"/>
    <property type="evidence" value="ECO:0007669"/>
    <property type="project" value="TreeGrafter"/>
</dbReference>
<dbReference type="GO" id="GO:0000977">
    <property type="term" value="F:RNA polymerase II transcription regulatory region sequence-specific DNA binding"/>
    <property type="evidence" value="ECO:0000250"/>
    <property type="project" value="UniProtKB"/>
</dbReference>
<dbReference type="GO" id="GO:0000976">
    <property type="term" value="F:transcription cis-regulatory region binding"/>
    <property type="evidence" value="ECO:0000250"/>
    <property type="project" value="UniProtKB"/>
</dbReference>
<dbReference type="GO" id="GO:0006915">
    <property type="term" value="P:apoptotic process"/>
    <property type="evidence" value="ECO:0007669"/>
    <property type="project" value="UniProtKB-KW"/>
</dbReference>
<dbReference type="GO" id="GO:0001782">
    <property type="term" value="P:B cell homeostasis"/>
    <property type="evidence" value="ECO:0000250"/>
    <property type="project" value="UniProtKB"/>
</dbReference>
<dbReference type="GO" id="GO:0042100">
    <property type="term" value="P:B cell proliferation"/>
    <property type="evidence" value="ECO:0000250"/>
    <property type="project" value="UniProtKB"/>
</dbReference>
<dbReference type="GO" id="GO:0050853">
    <property type="term" value="P:B cell receptor signaling pathway"/>
    <property type="evidence" value="ECO:0000250"/>
    <property type="project" value="UniProtKB"/>
</dbReference>
<dbReference type="GO" id="GO:0001568">
    <property type="term" value="P:blood vessel development"/>
    <property type="evidence" value="ECO:0000250"/>
    <property type="project" value="UniProtKB"/>
</dbReference>
<dbReference type="GO" id="GO:0001974">
    <property type="term" value="P:blood vessel remodeling"/>
    <property type="evidence" value="ECO:0000250"/>
    <property type="project" value="UniProtKB"/>
</dbReference>
<dbReference type="GO" id="GO:0003211">
    <property type="term" value="P:cardiac ventricle formation"/>
    <property type="evidence" value="ECO:0000250"/>
    <property type="project" value="UniProtKB"/>
</dbReference>
<dbReference type="GO" id="GO:0035051">
    <property type="term" value="P:cardiocyte differentiation"/>
    <property type="evidence" value="ECO:0000250"/>
    <property type="project" value="UniProtKB"/>
</dbReference>
<dbReference type="GO" id="GO:0071277">
    <property type="term" value="P:cellular response to calcium ion"/>
    <property type="evidence" value="ECO:0000250"/>
    <property type="project" value="UniProtKB"/>
</dbReference>
<dbReference type="GO" id="GO:0071498">
    <property type="term" value="P:cellular response to fluid shear stress"/>
    <property type="evidence" value="ECO:0000250"/>
    <property type="project" value="UniProtKB"/>
</dbReference>
<dbReference type="GO" id="GO:0071222">
    <property type="term" value="P:cellular response to lipopolysaccharide"/>
    <property type="evidence" value="ECO:0000250"/>
    <property type="project" value="UniProtKB"/>
</dbReference>
<dbReference type="GO" id="GO:0071374">
    <property type="term" value="P:cellular response to parathyroid hormone stimulus"/>
    <property type="evidence" value="ECO:0000250"/>
    <property type="project" value="UniProtKB"/>
</dbReference>
<dbReference type="GO" id="GO:0071560">
    <property type="term" value="P:cellular response to transforming growth factor beta stimulus"/>
    <property type="evidence" value="ECO:0000250"/>
    <property type="project" value="UniProtKB"/>
</dbReference>
<dbReference type="GO" id="GO:0035984">
    <property type="term" value="P:cellular response to trichostatin A"/>
    <property type="evidence" value="ECO:0000250"/>
    <property type="project" value="UniProtKB"/>
</dbReference>
<dbReference type="GO" id="GO:0071466">
    <property type="term" value="P:cellular response to xenobiotic stimulus"/>
    <property type="evidence" value="ECO:0000250"/>
    <property type="project" value="UniProtKB"/>
</dbReference>
<dbReference type="GO" id="GO:0002062">
    <property type="term" value="P:chondrocyte differentiation"/>
    <property type="evidence" value="ECO:0000250"/>
    <property type="project" value="UniProtKB"/>
</dbReference>
<dbReference type="GO" id="GO:0001958">
    <property type="term" value="P:endochondral ossification"/>
    <property type="evidence" value="ECO:0000250"/>
    <property type="project" value="UniProtKB"/>
</dbReference>
<dbReference type="GO" id="GO:2001013">
    <property type="term" value="P:epithelial cell proliferation involved in renal tubule morphogenesis"/>
    <property type="evidence" value="ECO:0000250"/>
    <property type="project" value="UniProtKB"/>
</dbReference>
<dbReference type="GO" id="GO:0002467">
    <property type="term" value="P:germinal center formation"/>
    <property type="evidence" value="ECO:0000250"/>
    <property type="project" value="UniProtKB"/>
</dbReference>
<dbReference type="GO" id="GO:0072102">
    <property type="term" value="P:glomerulus morphogenesis"/>
    <property type="evidence" value="ECO:0000250"/>
    <property type="project" value="UniProtKB"/>
</dbReference>
<dbReference type="GO" id="GO:0007507">
    <property type="term" value="P:heart development"/>
    <property type="evidence" value="ECO:0000250"/>
    <property type="project" value="UniProtKB"/>
</dbReference>
<dbReference type="GO" id="GO:0001947">
    <property type="term" value="P:heart looping"/>
    <property type="evidence" value="ECO:0000250"/>
    <property type="project" value="UniProtKB"/>
</dbReference>
<dbReference type="GO" id="GO:0006959">
    <property type="term" value="P:humoral immune response"/>
    <property type="evidence" value="ECO:0000250"/>
    <property type="project" value="UniProtKB"/>
</dbReference>
<dbReference type="GO" id="GO:0007611">
    <property type="term" value="P:learning or memory"/>
    <property type="evidence" value="ECO:0000250"/>
    <property type="project" value="UniProtKB"/>
</dbReference>
<dbReference type="GO" id="GO:0000165">
    <property type="term" value="P:MAPK cascade"/>
    <property type="evidence" value="ECO:0000250"/>
    <property type="project" value="UniProtKB"/>
</dbReference>
<dbReference type="GO" id="GO:0030318">
    <property type="term" value="P:melanocyte differentiation"/>
    <property type="evidence" value="ECO:0000250"/>
    <property type="project" value="UniProtKB"/>
</dbReference>
<dbReference type="GO" id="GO:0007521">
    <property type="term" value="P:muscle cell fate determination"/>
    <property type="evidence" value="ECO:0000250"/>
    <property type="project" value="UniProtKB"/>
</dbReference>
<dbReference type="GO" id="GO:0010629">
    <property type="term" value="P:negative regulation of gene expression"/>
    <property type="evidence" value="ECO:0000250"/>
    <property type="project" value="UniProtKB"/>
</dbReference>
<dbReference type="GO" id="GO:0043524">
    <property type="term" value="P:negative regulation of neuron apoptotic process"/>
    <property type="evidence" value="ECO:0000250"/>
    <property type="project" value="UniProtKB"/>
</dbReference>
<dbReference type="GO" id="GO:0030279">
    <property type="term" value="P:negative regulation of ossification"/>
    <property type="evidence" value="ECO:0000250"/>
    <property type="project" value="UniProtKB"/>
</dbReference>
<dbReference type="GO" id="GO:0000122">
    <property type="term" value="P:negative regulation of transcription by RNA polymerase II"/>
    <property type="evidence" value="ECO:0000250"/>
    <property type="project" value="UniProtKB"/>
</dbReference>
<dbReference type="GO" id="GO:0072160">
    <property type="term" value="P:nephron tubule epithelial cell differentiation"/>
    <property type="evidence" value="ECO:0000250"/>
    <property type="project" value="UniProtKB"/>
</dbReference>
<dbReference type="GO" id="GO:0014033">
    <property type="term" value="P:neural crest cell differentiation"/>
    <property type="evidence" value="ECO:0000250"/>
    <property type="project" value="UniProtKB"/>
</dbReference>
<dbReference type="GO" id="GO:0048666">
    <property type="term" value="P:neuron development"/>
    <property type="evidence" value="ECO:0000250"/>
    <property type="project" value="UniProtKB"/>
</dbReference>
<dbReference type="GO" id="GO:0030182">
    <property type="term" value="P:neuron differentiation"/>
    <property type="evidence" value="ECO:0000250"/>
    <property type="project" value="UniProtKB"/>
</dbReference>
<dbReference type="GO" id="GO:0001649">
    <property type="term" value="P:osteoblast differentiation"/>
    <property type="evidence" value="ECO:0000250"/>
    <property type="project" value="UniProtKB"/>
</dbReference>
<dbReference type="GO" id="GO:0003151">
    <property type="term" value="P:outflow tract morphogenesis"/>
    <property type="evidence" value="ECO:0000250"/>
    <property type="project" value="UniProtKB"/>
</dbReference>
<dbReference type="GO" id="GO:0030220">
    <property type="term" value="P:platelet formation"/>
    <property type="evidence" value="ECO:0000250"/>
    <property type="project" value="UniProtKB"/>
</dbReference>
<dbReference type="GO" id="GO:0030890">
    <property type="term" value="P:positive regulation of B cell proliferation"/>
    <property type="evidence" value="ECO:0000250"/>
    <property type="project" value="UniProtKB"/>
</dbReference>
<dbReference type="GO" id="GO:2000987">
    <property type="term" value="P:positive regulation of behavioral fear response"/>
    <property type="evidence" value="ECO:0000250"/>
    <property type="project" value="UniProtKB"/>
</dbReference>
<dbReference type="GO" id="GO:0030501">
    <property type="term" value="P:positive regulation of bone mineralization"/>
    <property type="evidence" value="ECO:0000250"/>
    <property type="project" value="UniProtKB"/>
</dbReference>
<dbReference type="GO" id="GO:2000727">
    <property type="term" value="P:positive regulation of cardiac muscle cell differentiation"/>
    <property type="evidence" value="ECO:0000250"/>
    <property type="project" value="UniProtKB"/>
</dbReference>
<dbReference type="GO" id="GO:0060045">
    <property type="term" value="P:positive regulation of cardiac muscle cell proliferation"/>
    <property type="evidence" value="ECO:0000250"/>
    <property type="project" value="UniProtKB"/>
</dbReference>
<dbReference type="GO" id="GO:0045893">
    <property type="term" value="P:positive regulation of DNA-templated transcription"/>
    <property type="evidence" value="ECO:0000250"/>
    <property type="project" value="UniProtKB"/>
</dbReference>
<dbReference type="GO" id="GO:0010628">
    <property type="term" value="P:positive regulation of gene expression"/>
    <property type="evidence" value="ECO:0000250"/>
    <property type="project" value="UniProtKB"/>
</dbReference>
<dbReference type="GO" id="GO:2000111">
    <property type="term" value="P:positive regulation of macrophage apoptotic process"/>
    <property type="evidence" value="ECO:0000250"/>
    <property type="project" value="UniProtKB"/>
</dbReference>
<dbReference type="GO" id="GO:0045663">
    <property type="term" value="P:positive regulation of myoblast differentiation"/>
    <property type="evidence" value="ECO:0000250"/>
    <property type="project" value="UniProtKB"/>
</dbReference>
<dbReference type="GO" id="GO:0045666">
    <property type="term" value="P:positive regulation of neuron differentiation"/>
    <property type="evidence" value="ECO:0000250"/>
    <property type="project" value="UniProtKB"/>
</dbReference>
<dbReference type="GO" id="GO:0045669">
    <property type="term" value="P:positive regulation of osteoblast differentiation"/>
    <property type="evidence" value="ECO:0000250"/>
    <property type="project" value="UniProtKB"/>
</dbReference>
<dbReference type="GO" id="GO:2001016">
    <property type="term" value="P:positive regulation of skeletal muscle cell differentiation"/>
    <property type="evidence" value="ECO:0000250"/>
    <property type="project" value="UniProtKB"/>
</dbReference>
<dbReference type="GO" id="GO:0048643">
    <property type="term" value="P:positive regulation of skeletal muscle tissue development"/>
    <property type="evidence" value="ECO:0000250"/>
    <property type="project" value="UniProtKB"/>
</dbReference>
<dbReference type="GO" id="GO:0045944">
    <property type="term" value="P:positive regulation of transcription by RNA polymerase II"/>
    <property type="evidence" value="ECO:0000250"/>
    <property type="project" value="UniProtKB"/>
</dbReference>
<dbReference type="GO" id="GO:0003138">
    <property type="term" value="P:primary heart field specification"/>
    <property type="evidence" value="ECO:0000250"/>
    <property type="project" value="UniProtKB"/>
</dbReference>
<dbReference type="GO" id="GO:0002634">
    <property type="term" value="P:regulation of germinal center formation"/>
    <property type="evidence" value="ECO:0000250"/>
    <property type="project" value="UniProtKB"/>
</dbReference>
<dbReference type="GO" id="GO:0045652">
    <property type="term" value="P:regulation of megakaryocyte differentiation"/>
    <property type="evidence" value="ECO:0000250"/>
    <property type="project" value="UniProtKB"/>
</dbReference>
<dbReference type="GO" id="GO:0060025">
    <property type="term" value="P:regulation of synaptic activity"/>
    <property type="evidence" value="ECO:0000250"/>
    <property type="project" value="UniProtKB"/>
</dbReference>
<dbReference type="GO" id="GO:0061333">
    <property type="term" value="P:renal tubule morphogenesis"/>
    <property type="evidence" value="ECO:0000250"/>
    <property type="project" value="UniProtKB"/>
</dbReference>
<dbReference type="GO" id="GO:0003139">
    <property type="term" value="P:secondary heart field specification"/>
    <property type="evidence" value="ECO:0000250"/>
    <property type="project" value="UniProtKB"/>
</dbReference>
<dbReference type="GO" id="GO:0003185">
    <property type="term" value="P:sinoatrial valve morphogenesis"/>
    <property type="evidence" value="ECO:0000250"/>
    <property type="project" value="UniProtKB"/>
</dbReference>
<dbReference type="GO" id="GO:0007519">
    <property type="term" value="P:skeletal muscle tissue development"/>
    <property type="evidence" value="ECO:0000250"/>
    <property type="project" value="UniProtKB"/>
</dbReference>
<dbReference type="GO" id="GO:0051145">
    <property type="term" value="P:smooth muscle cell differentiation"/>
    <property type="evidence" value="ECO:0000250"/>
    <property type="project" value="UniProtKB"/>
</dbReference>
<dbReference type="GO" id="GO:0055012">
    <property type="term" value="P:ventricular cardiac muscle cell differentiation"/>
    <property type="evidence" value="ECO:0000250"/>
    <property type="project" value="UniProtKB"/>
</dbReference>
<dbReference type="CDD" id="cd00265">
    <property type="entry name" value="MADS_MEF2_like"/>
    <property type="match status" value="1"/>
</dbReference>
<dbReference type="FunFam" id="3.40.1810.10:FF:000001">
    <property type="entry name" value="Myocyte-specific enhancer factor 2A homolog"/>
    <property type="match status" value="1"/>
</dbReference>
<dbReference type="Gene3D" id="3.40.1810.10">
    <property type="entry name" value="Transcription factor, MADS-box"/>
    <property type="match status" value="1"/>
</dbReference>
<dbReference type="InterPro" id="IPR022102">
    <property type="entry name" value="HJURP_C"/>
</dbReference>
<dbReference type="InterPro" id="IPR033896">
    <property type="entry name" value="MEF2-like_N"/>
</dbReference>
<dbReference type="InterPro" id="IPR002100">
    <property type="entry name" value="TF_MADSbox"/>
</dbReference>
<dbReference type="InterPro" id="IPR036879">
    <property type="entry name" value="TF_MADSbox_sf"/>
</dbReference>
<dbReference type="PANTHER" id="PTHR11945">
    <property type="entry name" value="MADS BOX PROTEIN"/>
    <property type="match status" value="1"/>
</dbReference>
<dbReference type="PANTHER" id="PTHR11945:SF534">
    <property type="entry name" value="MYOCYTE-SPECIFIC ENHANCER FACTOR 2"/>
    <property type="match status" value="1"/>
</dbReference>
<dbReference type="Pfam" id="PF12347">
    <property type="entry name" value="HJURP_C"/>
    <property type="match status" value="1"/>
</dbReference>
<dbReference type="Pfam" id="PF00319">
    <property type="entry name" value="SRF-TF"/>
    <property type="match status" value="1"/>
</dbReference>
<dbReference type="PRINTS" id="PR00404">
    <property type="entry name" value="MADSDOMAIN"/>
</dbReference>
<dbReference type="SMART" id="SM00432">
    <property type="entry name" value="MADS"/>
    <property type="match status" value="1"/>
</dbReference>
<dbReference type="SUPFAM" id="SSF55455">
    <property type="entry name" value="SRF-like"/>
    <property type="match status" value="1"/>
</dbReference>
<dbReference type="PROSITE" id="PS00350">
    <property type="entry name" value="MADS_BOX_1"/>
    <property type="match status" value="1"/>
</dbReference>
<dbReference type="PROSITE" id="PS50066">
    <property type="entry name" value="MADS_BOX_2"/>
    <property type="match status" value="1"/>
</dbReference>
<accession>Q5R444</accession>
<sequence>MGRKKIQITRIMDERNRQVTFTKRKFGLMKKAYELSVLCDCEIALIIFNSTNKLFQYASTDMDKVLLKYTEYNEPHESRTNSDIVETLRKKGLNGCDSPDPDADDSVGHSPESEDKYRKINEDIDLMISRQRLCAVPPPNFEMPVSIPVSSHNSLVYSNPVSSLGNPNLLPLAHPSLQRNSMSPGVTHRPPSAGNTGGLMGGDLTSGAGTSAGNGYGNPRNSPGLLVSPGNLNKNMQAKSPPPMNLGMNNRKPDLRVLIPPGSKNTMPSVSEDVDLLLNQRINNSQSAQSLATPVVSVATPTLPGQGMGGYPSAISTTYGTEYSLSSADLSSLSGFNTASALHLGSVTGWQQQHLHNMPPSALSQLGACTSTHLSQSSNLSLPSTQSLNIKSEPVSPPRDRTTTPSRYPQHTRHEAGRSPVDSLSSCSSSYDGSDREDHRNEFHSPIGLTRPSPDERESPSVKRMRLSEGWAT</sequence>
<reference key="1">
    <citation type="submission" date="2004-11" db="EMBL/GenBank/DDBJ databases">
        <authorList>
            <consortium name="The German cDNA consortium"/>
        </authorList>
    </citation>
    <scope>NUCLEOTIDE SEQUENCE [LARGE SCALE MRNA]</scope>
    <source>
        <tissue>Brain cortex</tissue>
    </source>
</reference>
<gene>
    <name evidence="3" type="primary">MEF2C</name>
</gene>
<proteinExistence type="evidence at transcript level"/>
<name>MEF2C_PONAB</name>
<comment type="function">
    <text evidence="3 4">Transcription activator which binds specifically to the MEF2 element present in the regulatory regions of many muscle-specific genes. Controls cardiac morphogenesis and myogenesis, and is also involved in vascular development. Enhances transcriptional activation mediated by SOX18. Plays an essential role in hippocampal-dependent learning and memory by suppressing the number of excitatory synapses and thus regulating basal and evoked synaptic transmission. Crucial for normal neuronal development, distribution, and electrical activity in the neocortex. Necessary for proper development of megakaryocytes and platelets and for bone marrow B-lymphopoiesis. Required for B-cell survival and proliferation in response to BCR stimulation, efficient IgG1 antibody responses to T-cell-dependent antigens and for normal induction of germinal center B-cells. May also be involved in neurogenesis and in the development of cortical architecture (By similarity).</text>
</comment>
<comment type="subunit">
    <text evidence="2 3 4">Forms a complex with class II HDACs in undifferentiating cells. On myogenic differentiation, HDACs are released into the cytoplasm allowing MEF2s to interact with other proteins for activation. Interacts with EP300 in differentiating cells; the interaction acetylates MEF2C leading to increased DNA binding and activation (By similarity). Interacts with HDAC7 and CARM1 (By similarity). Interacts with HDAC4, HDAC7 and HDAC9; the interaction with HDACs represses transcriptional activity (By similarity). Interacts with LPIN1. Interacts with MYOCD. Interacts with AKAP13. Interacts with FOXK1; the interaction inhibits MEF2C transactivation activity (By similarity). Interacts (via N-terminus) with HABP4; this interaction decreases DNA-binding activity of MEF2C in myocardial cells in response to mechanical stress (By similarity). Interacts with JPH2; interaction specifically takes place with the Junctophilin-2 N-terminal fragment cleavage product of JPH2 (By similarity). Interacts (via MADS box) with SOX18 (By similarity). Interacts with PHF7; the interaction promotes MEF2C binding to its transcription targets (By similarity).</text>
</comment>
<comment type="subcellular location">
    <subcellularLocation>
        <location evidence="2">Nucleus</location>
    </subcellularLocation>
    <subcellularLocation>
        <location evidence="2">Cytoplasm</location>
        <location evidence="2">Sarcoplasm</location>
    </subcellularLocation>
</comment>
<comment type="domain">
    <text evidence="1">The beta domain is required for enhancement of transcriptional activity.</text>
</comment>
<comment type="PTM">
    <text evidence="1">Phosphorylated on Ser-59; which enhances DNA binding activity. Phosphorylated on Ser-396; which is required for Lys-391 sumoylation and inhibits transcriptional activity.</text>
</comment>
<comment type="PTM">
    <text evidence="1">Acetylated by p300 on several sites in diffentiating myocytes. Acetylation on Lys-4 increases DNA binding and transactivation (By similarity).</text>
</comment>
<comment type="PTM">
    <text evidence="1">Sumoylated on Lys-391 with SUMO2 but not SUMO1; which represses transcriptional activity.</text>
</comment>
<comment type="PTM">
    <text evidence="1">Proteolytically cleaved in cerebellar granule neurons on several sites by caspase 3 and caspase 7 following neurotoxicity. Preferentially cleaves the CDK5-mediated hyperphosphorylated form which leads to neuron apoptosis and transcriptional inactivation (By similarity).</text>
</comment>
<comment type="similarity">
    <text evidence="8">Belongs to the MEF2 family.</text>
</comment>
<protein>
    <recommendedName>
        <fullName evidence="8">Myocyte-specific enhancer factor 2C</fullName>
    </recommendedName>
</protein>
<feature type="chain" id="PRO_0000285804" description="Myocyte-specific enhancer factor 2C">
    <location>
        <begin position="1"/>
        <end position="473"/>
    </location>
</feature>
<feature type="domain" description="MADS-box" evidence="6">
    <location>
        <begin position="3"/>
        <end position="57"/>
    </location>
</feature>
<feature type="DNA-binding region" description="Mef2-type" evidence="5">
    <location>
        <begin position="58"/>
        <end position="86"/>
    </location>
</feature>
<feature type="region of interest" description="Disordered" evidence="7">
    <location>
        <begin position="91"/>
        <end position="116"/>
    </location>
</feature>
<feature type="region of interest" description="Disordered" evidence="7">
    <location>
        <begin position="180"/>
        <end position="224"/>
    </location>
</feature>
<feature type="region of interest" description="Beta domain" evidence="1">
    <location>
        <begin position="271"/>
        <end position="278"/>
    </location>
</feature>
<feature type="region of interest" description="Transcription repressor" evidence="1">
    <location>
        <begin position="368"/>
        <end position="399"/>
    </location>
</feature>
<feature type="region of interest" description="Disordered" evidence="7">
    <location>
        <begin position="375"/>
        <end position="473"/>
    </location>
</feature>
<feature type="compositionally biased region" description="Polar residues" evidence="7">
    <location>
        <begin position="375"/>
        <end position="390"/>
    </location>
</feature>
<feature type="compositionally biased region" description="Low complexity" evidence="7">
    <location>
        <begin position="419"/>
        <end position="432"/>
    </location>
</feature>
<feature type="compositionally biased region" description="Basic and acidic residues" evidence="7">
    <location>
        <begin position="433"/>
        <end position="443"/>
    </location>
</feature>
<feature type="site" description="Cleavage" evidence="8">
    <location>
        <begin position="432"/>
        <end position="433"/>
    </location>
</feature>
<feature type="modified residue" description="N6-acetyllysine" evidence="4">
    <location>
        <position position="4"/>
    </location>
</feature>
<feature type="modified residue" description="Phosphoserine; by CK2" evidence="4">
    <location>
        <position position="59"/>
    </location>
</feature>
<feature type="modified residue" description="Phosphoserine" evidence="4">
    <location>
        <position position="98"/>
    </location>
</feature>
<feature type="modified residue" description="Phosphoserine" evidence="4">
    <location>
        <position position="106"/>
    </location>
</feature>
<feature type="modified residue" description="Phosphoserine" evidence="4">
    <location>
        <position position="110"/>
    </location>
</feature>
<feature type="modified residue" description="N6-acetyllysine" evidence="3">
    <location>
        <position position="116"/>
    </location>
</feature>
<feature type="modified residue" description="N6-acetyllysine" evidence="3">
    <location>
        <position position="119"/>
    </location>
</feature>
<feature type="modified residue" description="Phosphoserine" evidence="3">
    <location>
        <position position="222"/>
    </location>
</feature>
<feature type="modified residue" description="Phosphoserine" evidence="3">
    <location>
        <position position="228"/>
    </location>
</feature>
<feature type="modified residue" description="N6-acetyllysine" evidence="3">
    <location>
        <position position="234"/>
    </location>
</feature>
<feature type="modified residue" description="N6-acetyllysine" evidence="3">
    <location>
        <position position="239"/>
    </location>
</feature>
<feature type="modified residue" description="Phosphoserine" evidence="3">
    <location>
        <position position="240"/>
    </location>
</feature>
<feature type="modified residue" description="N6-acetyllysine" evidence="3">
    <location>
        <position position="252"/>
    </location>
</feature>
<feature type="modified residue" description="N6-acetyllysine" evidence="3">
    <location>
        <position position="264"/>
    </location>
</feature>
<feature type="modified residue" description="Phosphothreonine; by MAPK14" evidence="3">
    <location>
        <position position="293"/>
    </location>
</feature>
<feature type="modified residue" description="Phosphothreonine; by MAPK14" evidence="3">
    <location>
        <position position="300"/>
    </location>
</feature>
<feature type="modified residue" description="Phosphoserine; by CDK5" evidence="3">
    <location>
        <position position="396"/>
    </location>
</feature>
<feature type="modified residue" description="Phosphoserine; by MAPK7" evidence="3">
    <location>
        <position position="419"/>
    </location>
</feature>
<feature type="modified residue" description="Phosphoserine" evidence="3">
    <location>
        <position position="445"/>
    </location>
</feature>
<feature type="cross-link" description="Glycyl lysine isopeptide (Lys-Gly) (interchain with G-Cter in SUMO)" evidence="1">
    <location>
        <position position="391"/>
    </location>
</feature>
<keyword id="KW-0007">Acetylation</keyword>
<keyword id="KW-0010">Activator</keyword>
<keyword id="KW-0053">Apoptosis</keyword>
<keyword id="KW-0963">Cytoplasm</keyword>
<keyword id="KW-0217">Developmental protein</keyword>
<keyword id="KW-0221">Differentiation</keyword>
<keyword id="KW-0238">DNA-binding</keyword>
<keyword id="KW-1017">Isopeptide bond</keyword>
<keyword id="KW-0524">Neurogenesis</keyword>
<keyword id="KW-0539">Nucleus</keyword>
<keyword id="KW-0597">Phosphoprotein</keyword>
<keyword id="KW-1185">Reference proteome</keyword>
<keyword id="KW-0804">Transcription</keyword>
<keyword id="KW-0805">Transcription regulation</keyword>
<keyword id="KW-0832">Ubl conjugation</keyword>
<organism>
    <name type="scientific">Pongo abelii</name>
    <name type="common">Sumatran orangutan</name>
    <name type="synonym">Pongo pygmaeus abelii</name>
    <dbReference type="NCBI Taxonomy" id="9601"/>
    <lineage>
        <taxon>Eukaryota</taxon>
        <taxon>Metazoa</taxon>
        <taxon>Chordata</taxon>
        <taxon>Craniata</taxon>
        <taxon>Vertebrata</taxon>
        <taxon>Euteleostomi</taxon>
        <taxon>Mammalia</taxon>
        <taxon>Eutheria</taxon>
        <taxon>Euarchontoglires</taxon>
        <taxon>Primates</taxon>
        <taxon>Haplorrhini</taxon>
        <taxon>Catarrhini</taxon>
        <taxon>Hominidae</taxon>
        <taxon>Pongo</taxon>
    </lineage>
</organism>